<name>CLS2_STAAC</name>
<dbReference type="EC" id="2.7.8.-" evidence="1"/>
<dbReference type="EMBL" id="CP000046">
    <property type="protein sequence ID" value="AAW37041.1"/>
    <property type="molecule type" value="Genomic_DNA"/>
</dbReference>
<dbReference type="SMR" id="Q5HEB2"/>
<dbReference type="KEGG" id="sac:SACOL2079"/>
<dbReference type="HOGENOM" id="CLU_038053_1_1_9"/>
<dbReference type="Proteomes" id="UP000000530">
    <property type="component" value="Chromosome"/>
</dbReference>
<dbReference type="GO" id="GO:0005886">
    <property type="term" value="C:plasma membrane"/>
    <property type="evidence" value="ECO:0007669"/>
    <property type="project" value="UniProtKB-SubCell"/>
</dbReference>
<dbReference type="GO" id="GO:0008808">
    <property type="term" value="F:cardiolipin synthase activity"/>
    <property type="evidence" value="ECO:0007669"/>
    <property type="project" value="InterPro"/>
</dbReference>
<dbReference type="GO" id="GO:0032049">
    <property type="term" value="P:cardiolipin biosynthetic process"/>
    <property type="evidence" value="ECO:0007669"/>
    <property type="project" value="InterPro"/>
</dbReference>
<dbReference type="CDD" id="cd09110">
    <property type="entry name" value="PLDc_CLS_1"/>
    <property type="match status" value="1"/>
</dbReference>
<dbReference type="CDD" id="cd09112">
    <property type="entry name" value="PLDc_CLS_2"/>
    <property type="match status" value="1"/>
</dbReference>
<dbReference type="FunFam" id="3.30.870.10:FF:000014">
    <property type="entry name" value="Cardiolipin synthase"/>
    <property type="match status" value="1"/>
</dbReference>
<dbReference type="FunFam" id="3.30.870.10:FF:000021">
    <property type="entry name" value="Cardiolipin synthase"/>
    <property type="match status" value="1"/>
</dbReference>
<dbReference type="Gene3D" id="3.30.870.10">
    <property type="entry name" value="Endonuclease Chain A"/>
    <property type="match status" value="2"/>
</dbReference>
<dbReference type="HAMAP" id="MF_01916">
    <property type="entry name" value="Cardiolipin_synth_Cls"/>
    <property type="match status" value="1"/>
</dbReference>
<dbReference type="InterPro" id="IPR030874">
    <property type="entry name" value="Cardiolipin_synth_Firmi"/>
</dbReference>
<dbReference type="InterPro" id="IPR022924">
    <property type="entry name" value="Cardiolipin_synthase"/>
</dbReference>
<dbReference type="InterPro" id="IPR027379">
    <property type="entry name" value="CLS_N"/>
</dbReference>
<dbReference type="InterPro" id="IPR025202">
    <property type="entry name" value="PLD-like_dom"/>
</dbReference>
<dbReference type="InterPro" id="IPR001736">
    <property type="entry name" value="PLipase_D/transphosphatidylase"/>
</dbReference>
<dbReference type="NCBIfam" id="TIGR04265">
    <property type="entry name" value="bac_cardiolipin"/>
    <property type="match status" value="1"/>
</dbReference>
<dbReference type="PANTHER" id="PTHR21248">
    <property type="entry name" value="CARDIOLIPIN SYNTHASE"/>
    <property type="match status" value="1"/>
</dbReference>
<dbReference type="PANTHER" id="PTHR21248:SF22">
    <property type="entry name" value="PHOSPHOLIPASE D"/>
    <property type="match status" value="1"/>
</dbReference>
<dbReference type="Pfam" id="PF13091">
    <property type="entry name" value="PLDc_2"/>
    <property type="match status" value="2"/>
</dbReference>
<dbReference type="Pfam" id="PF13396">
    <property type="entry name" value="PLDc_N"/>
    <property type="match status" value="1"/>
</dbReference>
<dbReference type="SMART" id="SM00155">
    <property type="entry name" value="PLDc"/>
    <property type="match status" value="2"/>
</dbReference>
<dbReference type="SUPFAM" id="SSF56024">
    <property type="entry name" value="Phospholipase D/nuclease"/>
    <property type="match status" value="2"/>
</dbReference>
<dbReference type="PROSITE" id="PS50035">
    <property type="entry name" value="PLD"/>
    <property type="match status" value="2"/>
</dbReference>
<gene>
    <name type="primary">cls2</name>
    <name type="ordered locus">SACOL2079</name>
</gene>
<proteinExistence type="inferred from homology"/>
<protein>
    <recommendedName>
        <fullName evidence="1">Cardiolipin synthase 2</fullName>
        <shortName evidence="1">CL synthase 2</shortName>
        <ecNumber evidence="1">2.7.8.-</ecNumber>
    </recommendedName>
</protein>
<evidence type="ECO:0000255" key="1">
    <source>
        <dbReference type="HAMAP-Rule" id="MF_01916"/>
    </source>
</evidence>
<comment type="function">
    <text evidence="1">Catalyzes the reversible phosphatidyl group transfer from one phosphatidylglycerol molecule to another to form cardiolipin (CL) (diphosphatidylglycerol) and glycerol.</text>
</comment>
<comment type="catalytic activity">
    <reaction evidence="1">
        <text>2 a 1,2-diacyl-sn-glycero-3-phospho-(1'-sn-glycerol) = a cardiolipin + glycerol</text>
        <dbReference type="Rhea" id="RHEA:31451"/>
        <dbReference type="ChEBI" id="CHEBI:17754"/>
        <dbReference type="ChEBI" id="CHEBI:62237"/>
        <dbReference type="ChEBI" id="CHEBI:64716"/>
    </reaction>
</comment>
<comment type="subcellular location">
    <subcellularLocation>
        <location evidence="1">Cell membrane</location>
        <topology evidence="1">Multi-pass membrane protein</topology>
    </subcellularLocation>
</comment>
<comment type="similarity">
    <text evidence="1">Belongs to the phospholipase D family. Cardiolipin synthase subfamily.</text>
</comment>
<keyword id="KW-1003">Cell membrane</keyword>
<keyword id="KW-0444">Lipid biosynthesis</keyword>
<keyword id="KW-0443">Lipid metabolism</keyword>
<keyword id="KW-0472">Membrane</keyword>
<keyword id="KW-0594">Phospholipid biosynthesis</keyword>
<keyword id="KW-1208">Phospholipid metabolism</keyword>
<keyword id="KW-0677">Repeat</keyword>
<keyword id="KW-0808">Transferase</keyword>
<keyword id="KW-0812">Transmembrane</keyword>
<keyword id="KW-1133">Transmembrane helix</keyword>
<accession>Q5HEB2</accession>
<feature type="chain" id="PRO_0000201268" description="Cardiolipin synthase 2">
    <location>
        <begin position="1"/>
        <end position="494"/>
    </location>
</feature>
<feature type="transmembrane region" description="Helical" evidence="1">
    <location>
        <begin position="14"/>
        <end position="34"/>
    </location>
</feature>
<feature type="transmembrane region" description="Helical" evidence="1">
    <location>
        <begin position="45"/>
        <end position="65"/>
    </location>
</feature>
<feature type="domain" description="PLD phosphodiesterase 1" evidence="1">
    <location>
        <begin position="229"/>
        <end position="256"/>
    </location>
</feature>
<feature type="domain" description="PLD phosphodiesterase 2" evidence="1">
    <location>
        <begin position="407"/>
        <end position="434"/>
    </location>
</feature>
<feature type="active site" evidence="1">
    <location>
        <position position="234"/>
    </location>
</feature>
<feature type="active site" evidence="1">
    <location>
        <position position="236"/>
    </location>
</feature>
<feature type="active site" evidence="1">
    <location>
        <position position="241"/>
    </location>
</feature>
<feature type="active site" evidence="1">
    <location>
        <position position="412"/>
    </location>
</feature>
<feature type="active site" evidence="1">
    <location>
        <position position="414"/>
    </location>
</feature>
<feature type="active site" evidence="1">
    <location>
        <position position="419"/>
    </location>
</feature>
<sequence>MIELLSIALKHSNIILNSIFIGAFILNLLFAFTIIFMERRSANSIWAWLLVLVFLPLFGFILYLLLGRQIQRDQIFKIDKEDKKGLELIVDEQLAALKNENFSNSNYQIVKFKEMIQMLLYNNAAFLTTDNDLKIYTDGQEKFDDLIQDIRNATDYIHFQYYIIQNDELGRTILNELGKKAEQGVEVKILYDDMGSRGLRKKGLRPFRNKGGHAEAFFPSKLPLINLRMNNRNHRKIVVIDGQIGYVGGFNVGDEYLGKSKKFGYWRDTHLRIVGDAVNALQLRFILDWNSQATRDHISYDDRYFPDVNSGGTIGVQIASSGPDEEWEQIKYGYLKMISSAKKSIYIQSPYFIPDQAFLDSIKIAALGGVDVNIMIPNKPDHPFVFWATLKNAASLLDAGVKVFHYDNGFLHSKTLVIDDEIASVGTANMDHRSFTLNFEVNAFIYDQQIAKKLKQAFIDDLAVSSELTKARYAKRSLWIKFKEGISQLLSPIL</sequence>
<reference key="1">
    <citation type="journal article" date="2005" name="J. Bacteriol.">
        <title>Insights on evolution of virulence and resistance from the complete genome analysis of an early methicillin-resistant Staphylococcus aureus strain and a biofilm-producing methicillin-resistant Staphylococcus epidermidis strain.</title>
        <authorList>
            <person name="Gill S.R."/>
            <person name="Fouts D.E."/>
            <person name="Archer G.L."/>
            <person name="Mongodin E.F."/>
            <person name="DeBoy R.T."/>
            <person name="Ravel J."/>
            <person name="Paulsen I.T."/>
            <person name="Kolonay J.F."/>
            <person name="Brinkac L.M."/>
            <person name="Beanan M.J."/>
            <person name="Dodson R.J."/>
            <person name="Daugherty S.C."/>
            <person name="Madupu R."/>
            <person name="Angiuoli S.V."/>
            <person name="Durkin A.S."/>
            <person name="Haft D.H."/>
            <person name="Vamathevan J.J."/>
            <person name="Khouri H."/>
            <person name="Utterback T.R."/>
            <person name="Lee C."/>
            <person name="Dimitrov G."/>
            <person name="Jiang L."/>
            <person name="Qin H."/>
            <person name="Weidman J."/>
            <person name="Tran K."/>
            <person name="Kang K.H."/>
            <person name="Hance I.R."/>
            <person name="Nelson K.E."/>
            <person name="Fraser C.M."/>
        </authorList>
    </citation>
    <scope>NUCLEOTIDE SEQUENCE [LARGE SCALE GENOMIC DNA]</scope>
    <source>
        <strain>COL</strain>
    </source>
</reference>
<organism>
    <name type="scientific">Staphylococcus aureus (strain COL)</name>
    <dbReference type="NCBI Taxonomy" id="93062"/>
    <lineage>
        <taxon>Bacteria</taxon>
        <taxon>Bacillati</taxon>
        <taxon>Bacillota</taxon>
        <taxon>Bacilli</taxon>
        <taxon>Bacillales</taxon>
        <taxon>Staphylococcaceae</taxon>
        <taxon>Staphylococcus</taxon>
    </lineage>
</organism>